<sequence length="181" mass="21328">MVFMLEDIYERIVRIREEGCRECLKVVCRMDDFQFNQLMSRLDLQIEITSRYSPPVRPALDPMISTELGVYRGDDENIGRLLGYPECCIRSFSENTRYAIDGEHLAEVSELDIPEGKCAIIMPSGFIPCSLRCQEAWERKLIGFADRDEFRRILELEDELMMRLPHFHLAYDEYFEKIVLE</sequence>
<name>Y236_METTH</name>
<accession>O26338</accession>
<gene>
    <name type="ordered locus">MTH_236</name>
</gene>
<feature type="chain" id="PRO_0000107170" description="Uncharacterized protein MTH_236">
    <location>
        <begin position="1"/>
        <end position="181"/>
    </location>
</feature>
<reference key="1">
    <citation type="journal article" date="1997" name="J. Bacteriol.">
        <title>Complete genome sequence of Methanobacterium thermoautotrophicum deltaH: functional analysis and comparative genomics.</title>
        <authorList>
            <person name="Smith D.R."/>
            <person name="Doucette-Stamm L.A."/>
            <person name="Deloughery C."/>
            <person name="Lee H.-M."/>
            <person name="Dubois J."/>
            <person name="Aldredge T."/>
            <person name="Bashirzadeh R."/>
            <person name="Blakely D."/>
            <person name="Cook R."/>
            <person name="Gilbert K."/>
            <person name="Harrison D."/>
            <person name="Hoang L."/>
            <person name="Keagle P."/>
            <person name="Lumm W."/>
            <person name="Pothier B."/>
            <person name="Qiu D."/>
            <person name="Spadafora R."/>
            <person name="Vicare R."/>
            <person name="Wang Y."/>
            <person name="Wierzbowski J."/>
            <person name="Gibson R."/>
            <person name="Jiwani N."/>
            <person name="Caruso A."/>
            <person name="Bush D."/>
            <person name="Safer H."/>
            <person name="Patwell D."/>
            <person name="Prabhakar S."/>
            <person name="McDougall S."/>
            <person name="Shimer G."/>
            <person name="Goyal A."/>
            <person name="Pietrovski S."/>
            <person name="Church G.M."/>
            <person name="Daniels C.J."/>
            <person name="Mao J.-I."/>
            <person name="Rice P."/>
            <person name="Noelling J."/>
            <person name="Reeve J.N."/>
        </authorList>
    </citation>
    <scope>NUCLEOTIDE SEQUENCE [LARGE SCALE GENOMIC DNA]</scope>
    <source>
        <strain>ATCC 29096 / DSM 1053 / JCM 10044 / NBRC 100330 / Delta H</strain>
    </source>
</reference>
<organism>
    <name type="scientific">Methanothermobacter thermautotrophicus (strain ATCC 29096 / DSM 1053 / JCM 10044 / NBRC 100330 / Delta H)</name>
    <name type="common">Methanobacterium thermoautotrophicum</name>
    <dbReference type="NCBI Taxonomy" id="187420"/>
    <lineage>
        <taxon>Archaea</taxon>
        <taxon>Methanobacteriati</taxon>
        <taxon>Methanobacteriota</taxon>
        <taxon>Methanomada group</taxon>
        <taxon>Methanobacteria</taxon>
        <taxon>Methanobacteriales</taxon>
        <taxon>Methanobacteriaceae</taxon>
        <taxon>Methanothermobacter</taxon>
    </lineage>
</organism>
<evidence type="ECO:0000305" key="1"/>
<protein>
    <recommendedName>
        <fullName>Uncharacterized protein MTH_236</fullName>
    </recommendedName>
</protein>
<proteinExistence type="predicted"/>
<comment type="similarity">
    <text evidence="1">To M.jannaschii MJ1106.</text>
</comment>
<keyword id="KW-1185">Reference proteome</keyword>
<dbReference type="EMBL" id="AE000666">
    <property type="protein sequence ID" value="AAB84742.1"/>
    <property type="molecule type" value="Genomic_DNA"/>
</dbReference>
<dbReference type="PIR" id="D69129">
    <property type="entry name" value="D69129"/>
</dbReference>
<dbReference type="FunCoup" id="O26338">
    <property type="interactions" value="3"/>
</dbReference>
<dbReference type="STRING" id="187420.MTH_236"/>
<dbReference type="PaxDb" id="187420-MTH_236"/>
<dbReference type="EnsemblBacteria" id="AAB84742">
    <property type="protein sequence ID" value="AAB84742"/>
    <property type="gene ID" value="MTH_236"/>
</dbReference>
<dbReference type="KEGG" id="mth:MTH_236"/>
<dbReference type="HOGENOM" id="CLU_129114_0_0_2"/>
<dbReference type="InParanoid" id="O26338"/>
<dbReference type="Proteomes" id="UP000005223">
    <property type="component" value="Chromosome"/>
</dbReference>
<dbReference type="InterPro" id="IPR007556">
    <property type="entry name" value="DUF483"/>
</dbReference>
<dbReference type="Pfam" id="PF04467">
    <property type="entry name" value="DUF483"/>
    <property type="match status" value="1"/>
</dbReference>